<accession>Q086I8</accession>
<keyword id="KW-0028">Amino-acid biosynthesis</keyword>
<keyword id="KW-0963">Cytoplasm</keyword>
<keyword id="KW-0220">Diaminopimelate biosynthesis</keyword>
<keyword id="KW-0457">Lysine biosynthesis</keyword>
<keyword id="KW-0520">NAD</keyword>
<keyword id="KW-0521">NADP</keyword>
<keyword id="KW-0560">Oxidoreductase</keyword>
<keyword id="KW-1185">Reference proteome</keyword>
<comment type="function">
    <text evidence="1">Catalyzes the conversion of 4-hydroxy-tetrahydrodipicolinate (HTPA) to tetrahydrodipicolinate.</text>
</comment>
<comment type="catalytic activity">
    <reaction evidence="1">
        <text>(S)-2,3,4,5-tetrahydrodipicolinate + NAD(+) + H2O = (2S,4S)-4-hydroxy-2,3,4,5-tetrahydrodipicolinate + NADH + H(+)</text>
        <dbReference type="Rhea" id="RHEA:35323"/>
        <dbReference type="ChEBI" id="CHEBI:15377"/>
        <dbReference type="ChEBI" id="CHEBI:15378"/>
        <dbReference type="ChEBI" id="CHEBI:16845"/>
        <dbReference type="ChEBI" id="CHEBI:57540"/>
        <dbReference type="ChEBI" id="CHEBI:57945"/>
        <dbReference type="ChEBI" id="CHEBI:67139"/>
        <dbReference type="EC" id="1.17.1.8"/>
    </reaction>
</comment>
<comment type="catalytic activity">
    <reaction evidence="1">
        <text>(S)-2,3,4,5-tetrahydrodipicolinate + NADP(+) + H2O = (2S,4S)-4-hydroxy-2,3,4,5-tetrahydrodipicolinate + NADPH + H(+)</text>
        <dbReference type="Rhea" id="RHEA:35331"/>
        <dbReference type="ChEBI" id="CHEBI:15377"/>
        <dbReference type="ChEBI" id="CHEBI:15378"/>
        <dbReference type="ChEBI" id="CHEBI:16845"/>
        <dbReference type="ChEBI" id="CHEBI:57783"/>
        <dbReference type="ChEBI" id="CHEBI:58349"/>
        <dbReference type="ChEBI" id="CHEBI:67139"/>
        <dbReference type="EC" id="1.17.1.8"/>
    </reaction>
</comment>
<comment type="pathway">
    <text evidence="1">Amino-acid biosynthesis; L-lysine biosynthesis via DAP pathway; (S)-tetrahydrodipicolinate from L-aspartate: step 4/4.</text>
</comment>
<comment type="subcellular location">
    <subcellularLocation>
        <location evidence="1">Cytoplasm</location>
    </subcellularLocation>
</comment>
<comment type="similarity">
    <text evidence="1">Belongs to the DapB family.</text>
</comment>
<comment type="caution">
    <text evidence="2">Was originally thought to be a dihydrodipicolinate reductase (DHDPR), catalyzing the conversion of dihydrodipicolinate to tetrahydrodipicolinate. However, it was shown in E.coli that the substrate of the enzymatic reaction is not dihydrodipicolinate (DHDP) but in fact (2S,4S)-4-hydroxy-2,3,4,5-tetrahydrodipicolinic acid (HTPA), the product released by the DapA-catalyzed reaction.</text>
</comment>
<feature type="chain" id="PRO_1000008635" description="4-hydroxy-tetrahydrodipicolinate reductase">
    <location>
        <begin position="1"/>
        <end position="270"/>
    </location>
</feature>
<feature type="active site" description="Proton donor/acceptor" evidence="1">
    <location>
        <position position="158"/>
    </location>
</feature>
<feature type="active site" description="Proton donor" evidence="1">
    <location>
        <position position="162"/>
    </location>
</feature>
<feature type="binding site" evidence="1">
    <location>
        <begin position="11"/>
        <end position="16"/>
    </location>
    <ligand>
        <name>NAD(+)</name>
        <dbReference type="ChEBI" id="CHEBI:57540"/>
    </ligand>
</feature>
<feature type="binding site" evidence="1">
    <location>
        <position position="37"/>
    </location>
    <ligand>
        <name>NAD(+)</name>
        <dbReference type="ChEBI" id="CHEBI:57540"/>
    </ligand>
</feature>
<feature type="binding site" evidence="1">
    <location>
        <position position="38"/>
    </location>
    <ligand>
        <name>NADP(+)</name>
        <dbReference type="ChEBI" id="CHEBI:58349"/>
    </ligand>
</feature>
<feature type="binding site" evidence="1">
    <location>
        <begin position="101"/>
        <end position="103"/>
    </location>
    <ligand>
        <name>NAD(+)</name>
        <dbReference type="ChEBI" id="CHEBI:57540"/>
    </ligand>
</feature>
<feature type="binding site" evidence="1">
    <location>
        <begin position="125"/>
        <end position="128"/>
    </location>
    <ligand>
        <name>NAD(+)</name>
        <dbReference type="ChEBI" id="CHEBI:57540"/>
    </ligand>
</feature>
<feature type="binding site" evidence="1">
    <location>
        <position position="159"/>
    </location>
    <ligand>
        <name>(S)-2,3,4,5-tetrahydrodipicolinate</name>
        <dbReference type="ChEBI" id="CHEBI:16845"/>
    </ligand>
</feature>
<feature type="binding site" evidence="1">
    <location>
        <begin position="168"/>
        <end position="169"/>
    </location>
    <ligand>
        <name>(S)-2,3,4,5-tetrahydrodipicolinate</name>
        <dbReference type="ChEBI" id="CHEBI:16845"/>
    </ligand>
</feature>
<dbReference type="EC" id="1.17.1.8" evidence="1"/>
<dbReference type="EMBL" id="CP000447">
    <property type="protein sequence ID" value="ABI70827.1"/>
    <property type="molecule type" value="Genomic_DNA"/>
</dbReference>
<dbReference type="RefSeq" id="WP_011636448.1">
    <property type="nucleotide sequence ID" value="NC_008345.1"/>
</dbReference>
<dbReference type="SMR" id="Q086I8"/>
<dbReference type="STRING" id="318167.Sfri_0974"/>
<dbReference type="KEGG" id="sfr:Sfri_0974"/>
<dbReference type="eggNOG" id="COG0289">
    <property type="taxonomic scope" value="Bacteria"/>
</dbReference>
<dbReference type="HOGENOM" id="CLU_047479_2_1_6"/>
<dbReference type="OrthoDB" id="9790352at2"/>
<dbReference type="UniPathway" id="UPA00034">
    <property type="reaction ID" value="UER00018"/>
</dbReference>
<dbReference type="Proteomes" id="UP000000684">
    <property type="component" value="Chromosome"/>
</dbReference>
<dbReference type="GO" id="GO:0005829">
    <property type="term" value="C:cytosol"/>
    <property type="evidence" value="ECO:0007669"/>
    <property type="project" value="TreeGrafter"/>
</dbReference>
<dbReference type="GO" id="GO:0008839">
    <property type="term" value="F:4-hydroxy-tetrahydrodipicolinate reductase"/>
    <property type="evidence" value="ECO:0007669"/>
    <property type="project" value="UniProtKB-EC"/>
</dbReference>
<dbReference type="GO" id="GO:0051287">
    <property type="term" value="F:NAD binding"/>
    <property type="evidence" value="ECO:0007669"/>
    <property type="project" value="UniProtKB-UniRule"/>
</dbReference>
<dbReference type="GO" id="GO:0050661">
    <property type="term" value="F:NADP binding"/>
    <property type="evidence" value="ECO:0007669"/>
    <property type="project" value="UniProtKB-UniRule"/>
</dbReference>
<dbReference type="GO" id="GO:0016726">
    <property type="term" value="F:oxidoreductase activity, acting on CH or CH2 groups, NAD or NADP as acceptor"/>
    <property type="evidence" value="ECO:0007669"/>
    <property type="project" value="UniProtKB-UniRule"/>
</dbReference>
<dbReference type="GO" id="GO:0019877">
    <property type="term" value="P:diaminopimelate biosynthetic process"/>
    <property type="evidence" value="ECO:0007669"/>
    <property type="project" value="UniProtKB-UniRule"/>
</dbReference>
<dbReference type="GO" id="GO:0009089">
    <property type="term" value="P:lysine biosynthetic process via diaminopimelate"/>
    <property type="evidence" value="ECO:0007669"/>
    <property type="project" value="UniProtKB-UniRule"/>
</dbReference>
<dbReference type="CDD" id="cd02274">
    <property type="entry name" value="DHDPR_N"/>
    <property type="match status" value="1"/>
</dbReference>
<dbReference type="FunFam" id="3.30.360.10:FF:000004">
    <property type="entry name" value="4-hydroxy-tetrahydrodipicolinate reductase"/>
    <property type="match status" value="1"/>
</dbReference>
<dbReference type="FunFam" id="3.40.50.720:FF:000048">
    <property type="entry name" value="4-hydroxy-tetrahydrodipicolinate reductase"/>
    <property type="match status" value="1"/>
</dbReference>
<dbReference type="Gene3D" id="3.30.360.10">
    <property type="entry name" value="Dihydrodipicolinate Reductase, domain 2"/>
    <property type="match status" value="1"/>
</dbReference>
<dbReference type="Gene3D" id="3.40.50.720">
    <property type="entry name" value="NAD(P)-binding Rossmann-like Domain"/>
    <property type="match status" value="1"/>
</dbReference>
<dbReference type="HAMAP" id="MF_00102">
    <property type="entry name" value="DapB"/>
    <property type="match status" value="1"/>
</dbReference>
<dbReference type="InterPro" id="IPR022663">
    <property type="entry name" value="DapB_C"/>
</dbReference>
<dbReference type="InterPro" id="IPR000846">
    <property type="entry name" value="DapB_N"/>
</dbReference>
<dbReference type="InterPro" id="IPR022664">
    <property type="entry name" value="DapB_N_CS"/>
</dbReference>
<dbReference type="InterPro" id="IPR023940">
    <property type="entry name" value="DHDPR_bac"/>
</dbReference>
<dbReference type="InterPro" id="IPR036291">
    <property type="entry name" value="NAD(P)-bd_dom_sf"/>
</dbReference>
<dbReference type="NCBIfam" id="TIGR00036">
    <property type="entry name" value="dapB"/>
    <property type="match status" value="1"/>
</dbReference>
<dbReference type="PANTHER" id="PTHR20836:SF0">
    <property type="entry name" value="4-HYDROXY-TETRAHYDRODIPICOLINATE REDUCTASE 1, CHLOROPLASTIC-RELATED"/>
    <property type="match status" value="1"/>
</dbReference>
<dbReference type="PANTHER" id="PTHR20836">
    <property type="entry name" value="DIHYDRODIPICOLINATE REDUCTASE"/>
    <property type="match status" value="1"/>
</dbReference>
<dbReference type="Pfam" id="PF05173">
    <property type="entry name" value="DapB_C"/>
    <property type="match status" value="1"/>
</dbReference>
<dbReference type="Pfam" id="PF01113">
    <property type="entry name" value="DapB_N"/>
    <property type="match status" value="1"/>
</dbReference>
<dbReference type="PIRSF" id="PIRSF000161">
    <property type="entry name" value="DHPR"/>
    <property type="match status" value="1"/>
</dbReference>
<dbReference type="SUPFAM" id="SSF55347">
    <property type="entry name" value="Glyceraldehyde-3-phosphate dehydrogenase-like, C-terminal domain"/>
    <property type="match status" value="1"/>
</dbReference>
<dbReference type="SUPFAM" id="SSF51735">
    <property type="entry name" value="NAD(P)-binding Rossmann-fold domains"/>
    <property type="match status" value="1"/>
</dbReference>
<dbReference type="PROSITE" id="PS01298">
    <property type="entry name" value="DAPB"/>
    <property type="match status" value="1"/>
</dbReference>
<gene>
    <name evidence="1" type="primary">dapB</name>
    <name type="ordered locus">Sfri_0974</name>
</gene>
<reference key="1">
    <citation type="submission" date="2006-08" db="EMBL/GenBank/DDBJ databases">
        <title>Complete sequence of Shewanella frigidimarina NCIMB 400.</title>
        <authorList>
            <consortium name="US DOE Joint Genome Institute"/>
            <person name="Copeland A."/>
            <person name="Lucas S."/>
            <person name="Lapidus A."/>
            <person name="Barry K."/>
            <person name="Detter J.C."/>
            <person name="Glavina del Rio T."/>
            <person name="Hammon N."/>
            <person name="Israni S."/>
            <person name="Dalin E."/>
            <person name="Tice H."/>
            <person name="Pitluck S."/>
            <person name="Fredrickson J.K."/>
            <person name="Kolker E."/>
            <person name="McCuel L.A."/>
            <person name="DiChristina T."/>
            <person name="Nealson K.H."/>
            <person name="Newman D."/>
            <person name="Tiedje J.M."/>
            <person name="Zhou J."/>
            <person name="Romine M.F."/>
            <person name="Culley D.E."/>
            <person name="Serres M."/>
            <person name="Chertkov O."/>
            <person name="Brettin T."/>
            <person name="Bruce D."/>
            <person name="Han C."/>
            <person name="Tapia R."/>
            <person name="Gilna P."/>
            <person name="Schmutz J."/>
            <person name="Larimer F."/>
            <person name="Land M."/>
            <person name="Hauser L."/>
            <person name="Kyrpides N."/>
            <person name="Mikhailova N."/>
            <person name="Richardson P."/>
        </authorList>
    </citation>
    <scope>NUCLEOTIDE SEQUENCE [LARGE SCALE GENOMIC DNA]</scope>
    <source>
        <strain>NCIMB 400</strain>
    </source>
</reference>
<protein>
    <recommendedName>
        <fullName evidence="1">4-hydroxy-tetrahydrodipicolinate reductase</fullName>
        <shortName evidence="1">HTPA reductase</shortName>
        <ecNumber evidence="1">1.17.1.8</ecNumber>
    </recommendedName>
</protein>
<sequence>MTAKVRIAVVGASGRMGRTLIESAKQQQVIILGAAIERTGSSLIGIDAGVLAGVGAMNVAITDSLDKVVNDFDVLIDFTSPESSIIHLDWCAKNHKAIVIGTTGFNHAQKEQINAYSEQVPVVLAPNMSVGVNVMWKLLALATEVMGDYTDIEIIEAHHRHKKDAPSGTALKMGEIIAQTLGRDLEQCAVFGREGITGERDPNTIGFATVRAGDIVGEHTAMFADIGERLEITHKASSRMTFANGAMRAAFWLSDQNAGLYDMQQVLGLN</sequence>
<proteinExistence type="inferred from homology"/>
<name>DAPB_SHEFN</name>
<organism>
    <name type="scientific">Shewanella frigidimarina (strain NCIMB 400)</name>
    <dbReference type="NCBI Taxonomy" id="318167"/>
    <lineage>
        <taxon>Bacteria</taxon>
        <taxon>Pseudomonadati</taxon>
        <taxon>Pseudomonadota</taxon>
        <taxon>Gammaproteobacteria</taxon>
        <taxon>Alteromonadales</taxon>
        <taxon>Shewanellaceae</taxon>
        <taxon>Shewanella</taxon>
    </lineage>
</organism>
<evidence type="ECO:0000255" key="1">
    <source>
        <dbReference type="HAMAP-Rule" id="MF_00102"/>
    </source>
</evidence>
<evidence type="ECO:0000305" key="2"/>